<organism>
    <name type="scientific">Shewanella sp. (strain MR-4)</name>
    <dbReference type="NCBI Taxonomy" id="60480"/>
    <lineage>
        <taxon>Bacteria</taxon>
        <taxon>Pseudomonadati</taxon>
        <taxon>Pseudomonadota</taxon>
        <taxon>Gammaproteobacteria</taxon>
        <taxon>Alteromonadales</taxon>
        <taxon>Shewanellaceae</taxon>
        <taxon>Shewanella</taxon>
    </lineage>
</organism>
<accession>Q0HNT6</accession>
<dbReference type="EMBL" id="CP000446">
    <property type="protein sequence ID" value="ABI37281.1"/>
    <property type="molecule type" value="Genomic_DNA"/>
</dbReference>
<dbReference type="RefSeq" id="WP_011621026.1">
    <property type="nucleotide sequence ID" value="NC_008321.1"/>
</dbReference>
<dbReference type="SMR" id="Q0HNT6"/>
<dbReference type="KEGG" id="she:Shewmr4_0200"/>
<dbReference type="HOGENOM" id="CLU_041575_5_2_6"/>
<dbReference type="GO" id="GO:1990904">
    <property type="term" value="C:ribonucleoprotein complex"/>
    <property type="evidence" value="ECO:0007669"/>
    <property type="project" value="UniProtKB-KW"/>
</dbReference>
<dbReference type="GO" id="GO:0005840">
    <property type="term" value="C:ribosome"/>
    <property type="evidence" value="ECO:0007669"/>
    <property type="project" value="UniProtKB-KW"/>
</dbReference>
<dbReference type="GO" id="GO:0019843">
    <property type="term" value="F:rRNA binding"/>
    <property type="evidence" value="ECO:0007669"/>
    <property type="project" value="UniProtKB-UniRule"/>
</dbReference>
<dbReference type="GO" id="GO:0003735">
    <property type="term" value="F:structural constituent of ribosome"/>
    <property type="evidence" value="ECO:0007669"/>
    <property type="project" value="InterPro"/>
</dbReference>
<dbReference type="GO" id="GO:0006412">
    <property type="term" value="P:translation"/>
    <property type="evidence" value="ECO:0007669"/>
    <property type="project" value="UniProtKB-UniRule"/>
</dbReference>
<dbReference type="FunFam" id="3.40.1370.10:FF:000001">
    <property type="entry name" value="50S ribosomal protein L4"/>
    <property type="match status" value="1"/>
</dbReference>
<dbReference type="Gene3D" id="3.40.1370.10">
    <property type="match status" value="1"/>
</dbReference>
<dbReference type="HAMAP" id="MF_01328_B">
    <property type="entry name" value="Ribosomal_uL4_B"/>
    <property type="match status" value="1"/>
</dbReference>
<dbReference type="InterPro" id="IPR002136">
    <property type="entry name" value="Ribosomal_uL4"/>
</dbReference>
<dbReference type="InterPro" id="IPR013005">
    <property type="entry name" value="Ribosomal_uL4-like"/>
</dbReference>
<dbReference type="InterPro" id="IPR023574">
    <property type="entry name" value="Ribosomal_uL4_dom_sf"/>
</dbReference>
<dbReference type="NCBIfam" id="TIGR03953">
    <property type="entry name" value="rplD_bact"/>
    <property type="match status" value="1"/>
</dbReference>
<dbReference type="PANTHER" id="PTHR10746">
    <property type="entry name" value="50S RIBOSOMAL PROTEIN L4"/>
    <property type="match status" value="1"/>
</dbReference>
<dbReference type="PANTHER" id="PTHR10746:SF6">
    <property type="entry name" value="LARGE RIBOSOMAL SUBUNIT PROTEIN UL4M"/>
    <property type="match status" value="1"/>
</dbReference>
<dbReference type="Pfam" id="PF00573">
    <property type="entry name" value="Ribosomal_L4"/>
    <property type="match status" value="1"/>
</dbReference>
<dbReference type="SUPFAM" id="SSF52166">
    <property type="entry name" value="Ribosomal protein L4"/>
    <property type="match status" value="1"/>
</dbReference>
<name>RL4_SHESM</name>
<feature type="chain" id="PRO_1000052498" description="Large ribosomal subunit protein uL4">
    <location>
        <begin position="1"/>
        <end position="201"/>
    </location>
</feature>
<feature type="region of interest" description="Disordered" evidence="2">
    <location>
        <begin position="45"/>
        <end position="71"/>
    </location>
</feature>
<keyword id="KW-0687">Ribonucleoprotein</keyword>
<keyword id="KW-0689">Ribosomal protein</keyword>
<keyword id="KW-0694">RNA-binding</keyword>
<keyword id="KW-0699">rRNA-binding</keyword>
<comment type="function">
    <text evidence="1">One of the primary rRNA binding proteins, this protein initially binds near the 5'-end of the 23S rRNA. It is important during the early stages of 50S assembly. It makes multiple contacts with different domains of the 23S rRNA in the assembled 50S subunit and ribosome.</text>
</comment>
<comment type="function">
    <text evidence="1">Forms part of the polypeptide exit tunnel.</text>
</comment>
<comment type="subunit">
    <text evidence="1">Part of the 50S ribosomal subunit.</text>
</comment>
<comment type="similarity">
    <text evidence="1">Belongs to the universal ribosomal protein uL4 family.</text>
</comment>
<protein>
    <recommendedName>
        <fullName evidence="1">Large ribosomal subunit protein uL4</fullName>
    </recommendedName>
    <alternativeName>
        <fullName evidence="3">50S ribosomal protein L4</fullName>
    </alternativeName>
</protein>
<evidence type="ECO:0000255" key="1">
    <source>
        <dbReference type="HAMAP-Rule" id="MF_01328"/>
    </source>
</evidence>
<evidence type="ECO:0000256" key="2">
    <source>
        <dbReference type="SAM" id="MobiDB-lite"/>
    </source>
</evidence>
<evidence type="ECO:0000305" key="3"/>
<proteinExistence type="inferred from homology"/>
<reference key="1">
    <citation type="submission" date="2006-08" db="EMBL/GenBank/DDBJ databases">
        <title>Complete sequence of Shewanella sp. MR-4.</title>
        <authorList>
            <consortium name="US DOE Joint Genome Institute"/>
            <person name="Copeland A."/>
            <person name="Lucas S."/>
            <person name="Lapidus A."/>
            <person name="Barry K."/>
            <person name="Detter J.C."/>
            <person name="Glavina del Rio T."/>
            <person name="Hammon N."/>
            <person name="Israni S."/>
            <person name="Dalin E."/>
            <person name="Tice H."/>
            <person name="Pitluck S."/>
            <person name="Kiss H."/>
            <person name="Brettin T."/>
            <person name="Bruce D."/>
            <person name="Han C."/>
            <person name="Tapia R."/>
            <person name="Gilna P."/>
            <person name="Schmutz J."/>
            <person name="Larimer F."/>
            <person name="Land M."/>
            <person name="Hauser L."/>
            <person name="Kyrpides N."/>
            <person name="Mikhailova N."/>
            <person name="Nealson K."/>
            <person name="Konstantinidis K."/>
            <person name="Klappenbach J."/>
            <person name="Tiedje J."/>
            <person name="Richardson P."/>
        </authorList>
    </citation>
    <scope>NUCLEOTIDE SEQUENCE [LARGE SCALE GENOMIC DNA]</scope>
    <source>
        <strain>MR-4</strain>
    </source>
</reference>
<gene>
    <name evidence="1" type="primary">rplD</name>
    <name type="ordered locus">Shewmr4_0200</name>
</gene>
<sequence>MELVLKDAQSALEVSETTFGRDFNEALVHQVVVAYAANARQGTRAQKTRAEVTGSGKKPWRQKGTGRARAGGVKGPIWRGGGVTFAAKTQDHSQKVNKKMYRGALKSILSELVRQDRLVVVESFSVEAPKTKELKAKLKAMNLEDVLIVTAEVDENLFLAARNLYKVDVRDVAGLDPVSLIAFNTVLVTADAVKQIEEMLA</sequence>